<proteinExistence type="inferred from homology"/>
<organism>
    <name type="scientific">Geobacillus kaustophilus (strain HTA426)</name>
    <dbReference type="NCBI Taxonomy" id="235909"/>
    <lineage>
        <taxon>Bacteria</taxon>
        <taxon>Bacillati</taxon>
        <taxon>Bacillota</taxon>
        <taxon>Bacilli</taxon>
        <taxon>Bacillales</taxon>
        <taxon>Anoxybacillaceae</taxon>
        <taxon>Geobacillus</taxon>
        <taxon>Geobacillus thermoleovorans group</taxon>
    </lineage>
</organism>
<name>DABA_GEOKA</name>
<feature type="chain" id="PRO_0000387263" description="Probable inorganic carbon transporter subunit DabA">
    <location>
        <begin position="1"/>
        <end position="870"/>
    </location>
</feature>
<feature type="binding site" evidence="1">
    <location>
        <position position="381"/>
    </location>
    <ligand>
        <name>Zn(2+)</name>
        <dbReference type="ChEBI" id="CHEBI:29105"/>
    </ligand>
</feature>
<feature type="binding site" evidence="1">
    <location>
        <position position="383"/>
    </location>
    <ligand>
        <name>Zn(2+)</name>
        <dbReference type="ChEBI" id="CHEBI:29105"/>
    </ligand>
</feature>
<feature type="binding site" evidence="1">
    <location>
        <position position="564"/>
    </location>
    <ligand>
        <name>Zn(2+)</name>
        <dbReference type="ChEBI" id="CHEBI:29105"/>
    </ligand>
</feature>
<feature type="binding site" evidence="1">
    <location>
        <position position="579"/>
    </location>
    <ligand>
        <name>Zn(2+)</name>
        <dbReference type="ChEBI" id="CHEBI:29105"/>
    </ligand>
</feature>
<evidence type="ECO:0000255" key="1">
    <source>
        <dbReference type="HAMAP-Rule" id="MF_01871"/>
    </source>
</evidence>
<sequence>MSRSVISLERSTEAKKAAACPLEVIVSEAAKVIAPLWPISAFIARHPWMGMEDKSFVDAADRLQEAYGIDLYPPMAVFHAALSKGEIDVSFIERRLQRWLDDEPLPAPRHEAERLCRALLWNDAVPEEALQMPKLIELAAAMPLRSVSIRTRSVRLGLEKRLDQQMIKWCKLFYDRGEAVWALPHREHGFYGSWRRLAPLDPSLSKEERKRLFDWPHHPEEALQRALEQLGVQDEEAVAYLEAHLLALPGWAGMMVWQSRRAGDEIGGLINYLAVRLSLEWVFTAPHLPLKEEENEDDRAVGPLLAAWIHWGGMTLDDWRRLPLEDRQARLVFADRFWRIGRRHLWLEAWEDTYEAKLKEAVLTRQPEEPKEQAAAQLLFCIDVRSEPFRRHVEAVGPFETYGCAGFFGLPIQTRVLDSDDAHPSCPAIVAPRHEINETASPETAAPYRRRRDLFRFVGRTFKKIKRHLLAGLLLPEMSGPWLGLHTIARSAAPAWAGQAIHQAEMSAQQKPKTTLSLDCQGHDETTGLPIGLTKEEQVQYVKQLLVNIGLTSSFAPLVVVCGHESETTNNPYASALDCGACGGAAGAFNARVFAALANLPHVRDGLAKEGIVIPDETVFVAAEHITTVDELRWVEVPPLSEAAEAAFRQLKQALAGVSRQANAERMAKLPHVGAMPRDPVAEARRRAVDWSEIRPEWGLAGNAAFLIGRRALTKGVHLDGRVFLHSYDWREDPTGEALAGIIAGPATVGQWINLQYYASTVAPNYYGSGDKTTQTVTGGIGVMQGNGSDLLAGLPWQSVAASDREWFHSPLRLLVIIEAPFSYIERLLDENSEFRRKVQNGWLRLASIDPDSGAWVNWEAGRLASVQQR</sequence>
<keyword id="KW-1003">Cell membrane</keyword>
<keyword id="KW-0472">Membrane</keyword>
<keyword id="KW-0479">Metal-binding</keyword>
<keyword id="KW-1185">Reference proteome</keyword>
<keyword id="KW-0813">Transport</keyword>
<keyword id="KW-0862">Zinc</keyword>
<protein>
    <recommendedName>
        <fullName evidence="1">Probable inorganic carbon transporter subunit DabA</fullName>
    </recommendedName>
</protein>
<accession>Q5L2V2</accession>
<dbReference type="EMBL" id="BA000043">
    <property type="protein sequence ID" value="BAD74728.1"/>
    <property type="molecule type" value="Genomic_DNA"/>
</dbReference>
<dbReference type="RefSeq" id="WP_011229947.1">
    <property type="nucleotide sequence ID" value="NC_006510.1"/>
</dbReference>
<dbReference type="SMR" id="Q5L2V2"/>
<dbReference type="STRING" id="235909.GK0443"/>
<dbReference type="KEGG" id="gka:GK0443"/>
<dbReference type="PATRIC" id="fig|235909.7.peg.521"/>
<dbReference type="eggNOG" id="COG3002">
    <property type="taxonomic scope" value="Bacteria"/>
</dbReference>
<dbReference type="HOGENOM" id="CLU_009885_0_0_9"/>
<dbReference type="Proteomes" id="UP000001172">
    <property type="component" value="Chromosome"/>
</dbReference>
<dbReference type="GO" id="GO:0005886">
    <property type="term" value="C:plasma membrane"/>
    <property type="evidence" value="ECO:0007669"/>
    <property type="project" value="UniProtKB-SubCell"/>
</dbReference>
<dbReference type="GO" id="GO:0008270">
    <property type="term" value="F:zinc ion binding"/>
    <property type="evidence" value="ECO:0007669"/>
    <property type="project" value="UniProtKB-UniRule"/>
</dbReference>
<dbReference type="HAMAP" id="MF_01871">
    <property type="entry name" value="DabA"/>
    <property type="match status" value="1"/>
</dbReference>
<dbReference type="InterPro" id="IPR018752">
    <property type="entry name" value="DabA"/>
</dbReference>
<dbReference type="PANTHER" id="PTHR38344:SF1">
    <property type="entry name" value="INORGANIC CARBON TRANSPORTER SUBUNIT DABA-RELATED"/>
    <property type="match status" value="1"/>
</dbReference>
<dbReference type="PANTHER" id="PTHR38344">
    <property type="entry name" value="UPF0753 PROTEIN AQ_863"/>
    <property type="match status" value="1"/>
</dbReference>
<dbReference type="Pfam" id="PF10070">
    <property type="entry name" value="DabA"/>
    <property type="match status" value="1"/>
</dbReference>
<comment type="function">
    <text evidence="1">Part of an energy-coupled inorganic carbon pump.</text>
</comment>
<comment type="cofactor">
    <cofactor evidence="1">
        <name>Zn(2+)</name>
        <dbReference type="ChEBI" id="CHEBI:29105"/>
    </cofactor>
</comment>
<comment type="subunit">
    <text evidence="1">Forms a complex with DabB.</text>
</comment>
<comment type="subcellular location">
    <subcellularLocation>
        <location evidence="1">Cell membrane</location>
        <topology evidence="1">Peripheral membrane protein</topology>
    </subcellularLocation>
</comment>
<comment type="similarity">
    <text evidence="1">Belongs to the inorganic carbon transporter (TC 9.A.2) DabA family.</text>
</comment>
<gene>
    <name evidence="1" type="primary">dabA</name>
    <name type="ordered locus">GK0443</name>
</gene>
<reference key="1">
    <citation type="journal article" date="2004" name="Nucleic Acids Res.">
        <title>Thermoadaptation trait revealed by the genome sequence of thermophilic Geobacillus kaustophilus.</title>
        <authorList>
            <person name="Takami H."/>
            <person name="Takaki Y."/>
            <person name="Chee G.-J."/>
            <person name="Nishi S."/>
            <person name="Shimamura S."/>
            <person name="Suzuki H."/>
            <person name="Matsui S."/>
            <person name="Uchiyama I."/>
        </authorList>
    </citation>
    <scope>NUCLEOTIDE SEQUENCE [LARGE SCALE GENOMIC DNA]</scope>
    <source>
        <strain>HTA426</strain>
    </source>
</reference>